<keyword id="KW-1185">Reference proteome</keyword>
<keyword id="KW-0687">Ribonucleoprotein</keyword>
<keyword id="KW-0689">Ribosomal protein</keyword>
<keyword id="KW-0694">RNA-binding</keyword>
<keyword id="KW-0699">rRNA-binding</keyword>
<reference key="1">
    <citation type="journal article" date="2004" name="Nat. Biotechnol.">
        <title>The genome sequence of the anaerobic, sulfate-reducing bacterium Desulfovibrio vulgaris Hildenborough.</title>
        <authorList>
            <person name="Heidelberg J.F."/>
            <person name="Seshadri R."/>
            <person name="Haveman S.A."/>
            <person name="Hemme C.L."/>
            <person name="Paulsen I.T."/>
            <person name="Kolonay J.F."/>
            <person name="Eisen J.A."/>
            <person name="Ward N.L."/>
            <person name="Methe B.A."/>
            <person name="Brinkac L.M."/>
            <person name="Daugherty S.C."/>
            <person name="DeBoy R.T."/>
            <person name="Dodson R.J."/>
            <person name="Durkin A.S."/>
            <person name="Madupu R."/>
            <person name="Nelson W.C."/>
            <person name="Sullivan S.A."/>
            <person name="Fouts D.E."/>
            <person name="Haft D.H."/>
            <person name="Selengut J."/>
            <person name="Peterson J.D."/>
            <person name="Davidsen T.M."/>
            <person name="Zafar N."/>
            <person name="Zhou L."/>
            <person name="Radune D."/>
            <person name="Dimitrov G."/>
            <person name="Hance M."/>
            <person name="Tran K."/>
            <person name="Khouri H.M."/>
            <person name="Gill J."/>
            <person name="Utterback T.R."/>
            <person name="Feldblyum T.V."/>
            <person name="Wall J.D."/>
            <person name="Voordouw G."/>
            <person name="Fraser C.M."/>
        </authorList>
    </citation>
    <scope>NUCLEOTIDE SEQUENCE [LARGE SCALE GENOMIC DNA]</scope>
    <source>
        <strain>ATCC 29579 / DSM 644 / CCUG 34227 / NCIMB 8303 / VKM B-1760 / Hildenborough</strain>
    </source>
</reference>
<accession>Q72CH8</accession>
<proteinExistence type="inferred from homology"/>
<evidence type="ECO:0000255" key="1">
    <source>
        <dbReference type="HAMAP-Rule" id="MF_01369"/>
    </source>
</evidence>
<evidence type="ECO:0000305" key="2"/>
<gene>
    <name evidence="1" type="primary">rplW</name>
    <name type="ordered locus">DVU_1305</name>
</gene>
<comment type="function">
    <text evidence="1">One of the early assembly proteins it binds 23S rRNA. One of the proteins that surrounds the polypeptide exit tunnel on the outside of the ribosome. Forms the main docking site for trigger factor binding to the ribosome.</text>
</comment>
<comment type="subunit">
    <text evidence="1">Part of the 50S ribosomal subunit. Contacts protein L29, and trigger factor when it is bound to the ribosome.</text>
</comment>
<comment type="similarity">
    <text evidence="1">Belongs to the universal ribosomal protein uL23 family.</text>
</comment>
<comment type="sequence caution" evidence="2">
    <conflict type="erroneous initiation">
        <sequence resource="EMBL-CDS" id="AAS95783"/>
    </conflict>
</comment>
<protein>
    <recommendedName>
        <fullName evidence="1">Large ribosomal subunit protein uL23</fullName>
    </recommendedName>
    <alternativeName>
        <fullName evidence="2">50S ribosomal protein L23</fullName>
    </alternativeName>
</protein>
<feature type="chain" id="PRO_0000272742" description="Large ribosomal subunit protein uL23">
    <location>
        <begin position="1"/>
        <end position="96"/>
    </location>
</feature>
<dbReference type="EMBL" id="AE017285">
    <property type="protein sequence ID" value="AAS95783.1"/>
    <property type="status" value="ALT_INIT"/>
    <property type="molecule type" value="Genomic_DNA"/>
</dbReference>
<dbReference type="RefSeq" id="WP_011792455.1">
    <property type="nucleotide sequence ID" value="NC_002937.3"/>
</dbReference>
<dbReference type="RefSeq" id="YP_010524.1">
    <property type="nucleotide sequence ID" value="NC_002937.3"/>
</dbReference>
<dbReference type="SMR" id="Q72CH8"/>
<dbReference type="STRING" id="882.DVU_1305"/>
<dbReference type="PaxDb" id="882-DVU_1305"/>
<dbReference type="EnsemblBacteria" id="AAS95783">
    <property type="protein sequence ID" value="AAS95783"/>
    <property type="gene ID" value="DVU_1305"/>
</dbReference>
<dbReference type="KEGG" id="dvu:DVU_1305"/>
<dbReference type="PATRIC" id="fig|882.5.peg.1217"/>
<dbReference type="eggNOG" id="COG0089">
    <property type="taxonomic scope" value="Bacteria"/>
</dbReference>
<dbReference type="HOGENOM" id="CLU_037562_3_1_7"/>
<dbReference type="OrthoDB" id="9793353at2"/>
<dbReference type="Proteomes" id="UP000002194">
    <property type="component" value="Chromosome"/>
</dbReference>
<dbReference type="GO" id="GO:1990904">
    <property type="term" value="C:ribonucleoprotein complex"/>
    <property type="evidence" value="ECO:0007669"/>
    <property type="project" value="UniProtKB-KW"/>
</dbReference>
<dbReference type="GO" id="GO:0005840">
    <property type="term" value="C:ribosome"/>
    <property type="evidence" value="ECO:0007669"/>
    <property type="project" value="UniProtKB-KW"/>
</dbReference>
<dbReference type="GO" id="GO:0019843">
    <property type="term" value="F:rRNA binding"/>
    <property type="evidence" value="ECO:0007669"/>
    <property type="project" value="UniProtKB-UniRule"/>
</dbReference>
<dbReference type="GO" id="GO:0003735">
    <property type="term" value="F:structural constituent of ribosome"/>
    <property type="evidence" value="ECO:0007669"/>
    <property type="project" value="InterPro"/>
</dbReference>
<dbReference type="GO" id="GO:0006412">
    <property type="term" value="P:translation"/>
    <property type="evidence" value="ECO:0007669"/>
    <property type="project" value="UniProtKB-UniRule"/>
</dbReference>
<dbReference type="Gene3D" id="3.30.70.330">
    <property type="match status" value="1"/>
</dbReference>
<dbReference type="HAMAP" id="MF_01369_B">
    <property type="entry name" value="Ribosomal_uL23_B"/>
    <property type="match status" value="1"/>
</dbReference>
<dbReference type="InterPro" id="IPR012677">
    <property type="entry name" value="Nucleotide-bd_a/b_plait_sf"/>
</dbReference>
<dbReference type="InterPro" id="IPR013025">
    <property type="entry name" value="Ribosomal_uL23-like"/>
</dbReference>
<dbReference type="InterPro" id="IPR012678">
    <property type="entry name" value="Ribosomal_uL23/eL15/eS24_sf"/>
</dbReference>
<dbReference type="InterPro" id="IPR001014">
    <property type="entry name" value="Ribosomal_uL23_CS"/>
</dbReference>
<dbReference type="NCBIfam" id="NF004363">
    <property type="entry name" value="PRK05738.2-4"/>
    <property type="match status" value="1"/>
</dbReference>
<dbReference type="PANTHER" id="PTHR11620">
    <property type="entry name" value="60S RIBOSOMAL PROTEIN L23A"/>
    <property type="match status" value="1"/>
</dbReference>
<dbReference type="Pfam" id="PF00276">
    <property type="entry name" value="Ribosomal_L23"/>
    <property type="match status" value="1"/>
</dbReference>
<dbReference type="SUPFAM" id="SSF54189">
    <property type="entry name" value="Ribosomal proteins S24e, L23 and L15e"/>
    <property type="match status" value="1"/>
</dbReference>
<dbReference type="PROSITE" id="PS00050">
    <property type="entry name" value="RIBOSOMAL_L23"/>
    <property type="match status" value="1"/>
</dbReference>
<organism>
    <name type="scientific">Nitratidesulfovibrio vulgaris (strain ATCC 29579 / DSM 644 / CCUG 34227 / NCIMB 8303 / VKM B-1760 / Hildenborough)</name>
    <name type="common">Desulfovibrio vulgaris</name>
    <dbReference type="NCBI Taxonomy" id="882"/>
    <lineage>
        <taxon>Bacteria</taxon>
        <taxon>Pseudomonadati</taxon>
        <taxon>Thermodesulfobacteriota</taxon>
        <taxon>Desulfovibrionia</taxon>
        <taxon>Desulfovibrionales</taxon>
        <taxon>Desulfovibrionaceae</taxon>
        <taxon>Nitratidesulfovibrio</taxon>
    </lineage>
</organism>
<name>RL23_NITV2</name>
<sequence>MDYTKILIKPLISEKTTYIKELSRQVAFFVDPRANKIEIKKAVEAAFKVKVADVNVVNRKSSDRVRQGRVVGRVAGFKKAYVTLAPGEKIEFFEGV</sequence>